<proteinExistence type="inferred from homology"/>
<keyword id="KW-0496">Mitochondrion</keyword>
<keyword id="KW-1185">Reference proteome</keyword>
<keyword id="KW-0687">Ribonucleoprotein</keyword>
<keyword id="KW-0689">Ribosomal protein</keyword>
<keyword id="KW-0809">Transit peptide</keyword>
<dbReference type="EMBL" id="CH476634">
    <property type="protein sequence ID" value="EDN93902.1"/>
    <property type="molecule type" value="Genomic_DNA"/>
</dbReference>
<dbReference type="RefSeq" id="XP_001589136.1">
    <property type="nucleotide sequence ID" value="XM_001589086.1"/>
</dbReference>
<dbReference type="SMR" id="A7EWR0"/>
<dbReference type="STRING" id="665079.A7EWR0"/>
<dbReference type="GeneID" id="5485455"/>
<dbReference type="KEGG" id="ssl:SS1G_09769"/>
<dbReference type="InParanoid" id="A7EWR0"/>
<dbReference type="OMA" id="KFVLWER"/>
<dbReference type="Proteomes" id="UP000001312">
    <property type="component" value="Unassembled WGS sequence"/>
</dbReference>
<dbReference type="GO" id="GO:0005762">
    <property type="term" value="C:mitochondrial large ribosomal subunit"/>
    <property type="evidence" value="ECO:0000318"/>
    <property type="project" value="GO_Central"/>
</dbReference>
<dbReference type="GO" id="GO:0003735">
    <property type="term" value="F:structural constituent of ribosome"/>
    <property type="evidence" value="ECO:0000318"/>
    <property type="project" value="GO_Central"/>
</dbReference>
<dbReference type="GO" id="GO:0032543">
    <property type="term" value="P:mitochondrial translation"/>
    <property type="evidence" value="ECO:0000318"/>
    <property type="project" value="GO_Central"/>
</dbReference>
<dbReference type="Gene3D" id="6.10.330.20">
    <property type="match status" value="1"/>
</dbReference>
<dbReference type="InterPro" id="IPR038340">
    <property type="entry name" value="MRP-L47_sf"/>
</dbReference>
<dbReference type="InterPro" id="IPR010729">
    <property type="entry name" value="Ribosomal_uL29_mit"/>
</dbReference>
<dbReference type="PANTHER" id="PTHR21183:SF18">
    <property type="entry name" value="LARGE RIBOSOMAL SUBUNIT PROTEIN UL29M"/>
    <property type="match status" value="1"/>
</dbReference>
<dbReference type="PANTHER" id="PTHR21183">
    <property type="entry name" value="RIBOSOMAL PROTEIN L47, MITOCHONDRIAL-RELATED"/>
    <property type="match status" value="1"/>
</dbReference>
<dbReference type="Pfam" id="PF06984">
    <property type="entry name" value="MRP-L47"/>
    <property type="match status" value="1"/>
</dbReference>
<feature type="transit peptide" description="Mitochondrion" evidence="2">
    <location>
        <begin position="1"/>
        <end status="unknown"/>
    </location>
</feature>
<feature type="chain" id="PRO_0000372412" description="Large ribosomal subunit protein uL29m">
    <location>
        <begin status="unknown"/>
        <end position="191"/>
    </location>
</feature>
<organism>
    <name type="scientific">Sclerotinia sclerotiorum (strain ATCC 18683 / 1980 / Ss-1)</name>
    <name type="common">White mold</name>
    <name type="synonym">Whetzelinia sclerotiorum</name>
    <dbReference type="NCBI Taxonomy" id="665079"/>
    <lineage>
        <taxon>Eukaryota</taxon>
        <taxon>Fungi</taxon>
        <taxon>Dikarya</taxon>
        <taxon>Ascomycota</taxon>
        <taxon>Pezizomycotina</taxon>
        <taxon>Leotiomycetes</taxon>
        <taxon>Helotiales</taxon>
        <taxon>Sclerotiniaceae</taxon>
        <taxon>Sclerotinia</taxon>
    </lineage>
</organism>
<accession>A7EWR0</accession>
<sequence length="191" mass="22251">MICNARQKEKGGKPTGLEYLEVGSRVRDDESKRNKVKVDEDHGLYEFFRHKDKALSTPAEEGNHGRPWSAEELRGKSWEDLHSLWWICCKERNRIATESYERDRLEAGYGEEDSEKRDMTVRRTQRAIKQVLTERYYSWQEAQVVAKDDPEIDLSGQGPIYTPRDFEEDIEEEVLAESEGEVEQKPAQITA</sequence>
<evidence type="ECO:0000250" key="1"/>
<evidence type="ECO:0000255" key="2"/>
<evidence type="ECO:0000305" key="3"/>
<reference key="1">
    <citation type="journal article" date="2011" name="PLoS Genet.">
        <title>Genomic analysis of the necrotrophic fungal pathogens Sclerotinia sclerotiorum and Botrytis cinerea.</title>
        <authorList>
            <person name="Amselem J."/>
            <person name="Cuomo C.A."/>
            <person name="van Kan J.A.L."/>
            <person name="Viaud M."/>
            <person name="Benito E.P."/>
            <person name="Couloux A."/>
            <person name="Coutinho P.M."/>
            <person name="de Vries R.P."/>
            <person name="Dyer P.S."/>
            <person name="Fillinger S."/>
            <person name="Fournier E."/>
            <person name="Gout L."/>
            <person name="Hahn M."/>
            <person name="Kohn L."/>
            <person name="Lapalu N."/>
            <person name="Plummer K.M."/>
            <person name="Pradier J.-M."/>
            <person name="Quevillon E."/>
            <person name="Sharon A."/>
            <person name="Simon A."/>
            <person name="ten Have A."/>
            <person name="Tudzynski B."/>
            <person name="Tudzynski P."/>
            <person name="Wincker P."/>
            <person name="Andrew M."/>
            <person name="Anthouard V."/>
            <person name="Beever R.E."/>
            <person name="Beffa R."/>
            <person name="Benoit I."/>
            <person name="Bouzid O."/>
            <person name="Brault B."/>
            <person name="Chen Z."/>
            <person name="Choquer M."/>
            <person name="Collemare J."/>
            <person name="Cotton P."/>
            <person name="Danchin E.G."/>
            <person name="Da Silva C."/>
            <person name="Gautier A."/>
            <person name="Giraud C."/>
            <person name="Giraud T."/>
            <person name="Gonzalez C."/>
            <person name="Grossetete S."/>
            <person name="Gueldener U."/>
            <person name="Henrissat B."/>
            <person name="Howlett B.J."/>
            <person name="Kodira C."/>
            <person name="Kretschmer M."/>
            <person name="Lappartient A."/>
            <person name="Leroch M."/>
            <person name="Levis C."/>
            <person name="Mauceli E."/>
            <person name="Neuveglise C."/>
            <person name="Oeser B."/>
            <person name="Pearson M."/>
            <person name="Poulain J."/>
            <person name="Poussereau N."/>
            <person name="Quesneville H."/>
            <person name="Rascle C."/>
            <person name="Schumacher J."/>
            <person name="Segurens B."/>
            <person name="Sexton A."/>
            <person name="Silva E."/>
            <person name="Sirven C."/>
            <person name="Soanes D.M."/>
            <person name="Talbot N.J."/>
            <person name="Templeton M."/>
            <person name="Yandava C."/>
            <person name="Yarden O."/>
            <person name="Zeng Q."/>
            <person name="Rollins J.A."/>
            <person name="Lebrun M.-H."/>
            <person name="Dickman M."/>
        </authorList>
    </citation>
    <scope>NUCLEOTIDE SEQUENCE [LARGE SCALE GENOMIC DNA]</scope>
    <source>
        <strain>ATCC 18683 / 1980 / Ss-1</strain>
    </source>
</reference>
<gene>
    <name type="primary">MRPL4</name>
    <name type="ORF">SS1G_09769</name>
</gene>
<name>RM04_SCLS1</name>
<protein>
    <recommendedName>
        <fullName evidence="3">Large ribosomal subunit protein uL29m</fullName>
    </recommendedName>
    <alternativeName>
        <fullName>54S ribosomal protein L4, mitochondrial</fullName>
    </alternativeName>
</protein>
<comment type="subunit">
    <text evidence="1">Component of the mitochondrial large ribosomal subunit. Mature mitochondrial ribosomes consist of a small (37S) and a large (54S) subunit. The 37S subunit contains at least 33 different proteins and 1 molecule of RNA (15S). The 54S subunit contains at least 45 different proteins and 1 molecule of RNA (21S) (By similarity).</text>
</comment>
<comment type="subcellular location">
    <subcellularLocation>
        <location evidence="1">Mitochondrion</location>
    </subcellularLocation>
</comment>
<comment type="similarity">
    <text evidence="3">Belongs to the universal ribosomal protein uL29 family.</text>
</comment>